<comment type="function">
    <text evidence="1">Produces ATP from ADP in the presence of a proton gradient across the membrane.</text>
</comment>
<comment type="subunit">
    <text evidence="1">F-type ATPases have 2 components, CF(1) - the catalytic core - and CF(0) - the membrane proton channel. CF(1) has five subunits: alpha(3), beta(3), gamma(1), delta(1), epsilon(1). CF(0) has three main subunits: a, b and c.</text>
</comment>
<comment type="subcellular location">
    <subcellularLocation>
        <location evidence="1">Cell inner membrane</location>
        <topology evidence="1">Peripheral membrane protein</topology>
    </subcellularLocation>
</comment>
<comment type="similarity">
    <text evidence="1">Belongs to the ATPase epsilon chain family.</text>
</comment>
<feature type="chain" id="PRO_1000056531" description="ATP synthase epsilon chain">
    <location>
        <begin position="1"/>
        <end position="142"/>
    </location>
</feature>
<organism>
    <name type="scientific">Shewanella baltica (strain OS155 / ATCC BAA-1091)</name>
    <dbReference type="NCBI Taxonomy" id="325240"/>
    <lineage>
        <taxon>Bacteria</taxon>
        <taxon>Pseudomonadati</taxon>
        <taxon>Pseudomonadota</taxon>
        <taxon>Gammaproteobacteria</taxon>
        <taxon>Alteromonadales</taxon>
        <taxon>Shewanellaceae</taxon>
        <taxon>Shewanella</taxon>
    </lineage>
</organism>
<proteinExistence type="inferred from homology"/>
<reference key="1">
    <citation type="submission" date="2007-02" db="EMBL/GenBank/DDBJ databases">
        <title>Complete sequence of chromosome of Shewanella baltica OS155.</title>
        <authorList>
            <consortium name="US DOE Joint Genome Institute"/>
            <person name="Copeland A."/>
            <person name="Lucas S."/>
            <person name="Lapidus A."/>
            <person name="Barry K."/>
            <person name="Detter J.C."/>
            <person name="Glavina del Rio T."/>
            <person name="Hammon N."/>
            <person name="Israni S."/>
            <person name="Dalin E."/>
            <person name="Tice H."/>
            <person name="Pitluck S."/>
            <person name="Sims D.R."/>
            <person name="Brettin T."/>
            <person name="Bruce D."/>
            <person name="Han C."/>
            <person name="Tapia R."/>
            <person name="Brainard J."/>
            <person name="Schmutz J."/>
            <person name="Larimer F."/>
            <person name="Land M."/>
            <person name="Hauser L."/>
            <person name="Kyrpides N."/>
            <person name="Mikhailova N."/>
            <person name="Brettar I."/>
            <person name="Klappenbach J."/>
            <person name="Konstantinidis K."/>
            <person name="Rodrigues J."/>
            <person name="Tiedje J."/>
            <person name="Richardson P."/>
        </authorList>
    </citation>
    <scope>NUCLEOTIDE SEQUENCE [LARGE SCALE GENOMIC DNA]</scope>
    <source>
        <strain>OS155 / ATCC BAA-1091</strain>
    </source>
</reference>
<accession>A3DAR3</accession>
<gene>
    <name evidence="1" type="primary">atpC</name>
    <name type="ordered locus">Sbal_4365</name>
</gene>
<name>ATPE_SHEB5</name>
<evidence type="ECO:0000255" key="1">
    <source>
        <dbReference type="HAMAP-Rule" id="MF_00530"/>
    </source>
</evidence>
<protein>
    <recommendedName>
        <fullName evidence="1">ATP synthase epsilon chain</fullName>
    </recommendedName>
    <alternativeName>
        <fullName evidence="1">ATP synthase F1 sector epsilon subunit</fullName>
    </alternativeName>
    <alternativeName>
        <fullName evidence="1">F-ATPase epsilon subunit</fullName>
    </alternativeName>
</protein>
<keyword id="KW-0066">ATP synthesis</keyword>
<keyword id="KW-0997">Cell inner membrane</keyword>
<keyword id="KW-1003">Cell membrane</keyword>
<keyword id="KW-0139">CF(1)</keyword>
<keyword id="KW-0375">Hydrogen ion transport</keyword>
<keyword id="KW-0406">Ion transport</keyword>
<keyword id="KW-0472">Membrane</keyword>
<keyword id="KW-1185">Reference proteome</keyword>
<keyword id="KW-0813">Transport</keyword>
<sequence>MAAMTVHLDIVSAESKIFSGRVVSLQVTGSEGELGIMHGHAPLLSYIKPGMARIVKQDGSEEVFYLSGGILEVQPSTVSVLADVVMRAKDIDEQAALEAKRRAEAHMANAGADFNYDAAMVELAKAMAQLRVVETIKKNIAR</sequence>
<dbReference type="EMBL" id="CP000563">
    <property type="protein sequence ID" value="ABN63826.1"/>
    <property type="molecule type" value="Genomic_DNA"/>
</dbReference>
<dbReference type="RefSeq" id="WP_011848294.1">
    <property type="nucleotide sequence ID" value="NC_009052.1"/>
</dbReference>
<dbReference type="SMR" id="A3DAR3"/>
<dbReference type="STRING" id="325240.Sbal_4365"/>
<dbReference type="KEGG" id="sbl:Sbal_4365"/>
<dbReference type="HOGENOM" id="CLU_084338_2_0_6"/>
<dbReference type="OrthoDB" id="9791445at2"/>
<dbReference type="Proteomes" id="UP000001557">
    <property type="component" value="Chromosome"/>
</dbReference>
<dbReference type="GO" id="GO:0005886">
    <property type="term" value="C:plasma membrane"/>
    <property type="evidence" value="ECO:0007669"/>
    <property type="project" value="UniProtKB-SubCell"/>
</dbReference>
<dbReference type="GO" id="GO:0045259">
    <property type="term" value="C:proton-transporting ATP synthase complex"/>
    <property type="evidence" value="ECO:0007669"/>
    <property type="project" value="UniProtKB-KW"/>
</dbReference>
<dbReference type="GO" id="GO:0005524">
    <property type="term" value="F:ATP binding"/>
    <property type="evidence" value="ECO:0007669"/>
    <property type="project" value="UniProtKB-UniRule"/>
</dbReference>
<dbReference type="GO" id="GO:0046933">
    <property type="term" value="F:proton-transporting ATP synthase activity, rotational mechanism"/>
    <property type="evidence" value="ECO:0007669"/>
    <property type="project" value="UniProtKB-UniRule"/>
</dbReference>
<dbReference type="CDD" id="cd12152">
    <property type="entry name" value="F1-ATPase_delta"/>
    <property type="match status" value="1"/>
</dbReference>
<dbReference type="FunFam" id="1.20.5.440:FF:000001">
    <property type="entry name" value="ATP synthase epsilon chain"/>
    <property type="match status" value="1"/>
</dbReference>
<dbReference type="FunFam" id="2.60.15.10:FF:000001">
    <property type="entry name" value="ATP synthase epsilon chain"/>
    <property type="match status" value="1"/>
</dbReference>
<dbReference type="Gene3D" id="1.20.5.440">
    <property type="entry name" value="ATP synthase delta/epsilon subunit, C-terminal domain"/>
    <property type="match status" value="1"/>
</dbReference>
<dbReference type="Gene3D" id="2.60.15.10">
    <property type="entry name" value="F0F1 ATP synthase delta/epsilon subunit, N-terminal"/>
    <property type="match status" value="1"/>
</dbReference>
<dbReference type="HAMAP" id="MF_00530">
    <property type="entry name" value="ATP_synth_epsil_bac"/>
    <property type="match status" value="1"/>
</dbReference>
<dbReference type="InterPro" id="IPR036794">
    <property type="entry name" value="ATP_F1_dsu/esu_C_sf"/>
</dbReference>
<dbReference type="InterPro" id="IPR001469">
    <property type="entry name" value="ATP_synth_F1_dsu/esu"/>
</dbReference>
<dbReference type="InterPro" id="IPR020546">
    <property type="entry name" value="ATP_synth_F1_dsu/esu_N"/>
</dbReference>
<dbReference type="InterPro" id="IPR020547">
    <property type="entry name" value="ATP_synth_F1_esu_C"/>
</dbReference>
<dbReference type="InterPro" id="IPR036771">
    <property type="entry name" value="ATPsynth_dsu/esu_N"/>
</dbReference>
<dbReference type="NCBIfam" id="TIGR01216">
    <property type="entry name" value="ATP_synt_epsi"/>
    <property type="match status" value="1"/>
</dbReference>
<dbReference type="NCBIfam" id="NF001847">
    <property type="entry name" value="PRK00571.1-4"/>
    <property type="match status" value="1"/>
</dbReference>
<dbReference type="PANTHER" id="PTHR13822">
    <property type="entry name" value="ATP SYNTHASE DELTA/EPSILON CHAIN"/>
    <property type="match status" value="1"/>
</dbReference>
<dbReference type="PANTHER" id="PTHR13822:SF10">
    <property type="entry name" value="ATP SYNTHASE EPSILON CHAIN, CHLOROPLASTIC"/>
    <property type="match status" value="1"/>
</dbReference>
<dbReference type="Pfam" id="PF00401">
    <property type="entry name" value="ATP-synt_DE"/>
    <property type="match status" value="1"/>
</dbReference>
<dbReference type="Pfam" id="PF02823">
    <property type="entry name" value="ATP-synt_DE_N"/>
    <property type="match status" value="1"/>
</dbReference>
<dbReference type="SUPFAM" id="SSF46604">
    <property type="entry name" value="Epsilon subunit of F1F0-ATP synthase C-terminal domain"/>
    <property type="match status" value="1"/>
</dbReference>
<dbReference type="SUPFAM" id="SSF51344">
    <property type="entry name" value="Epsilon subunit of F1F0-ATP synthase N-terminal domain"/>
    <property type="match status" value="1"/>
</dbReference>